<keyword id="KW-0732">Signal</keyword>
<proteinExistence type="uncertain"/>
<protein>
    <recommendedName>
        <fullName evidence="2">Putative uncharacterized protein YER137W-A</fullName>
    </recommendedName>
</protein>
<feature type="signal peptide" evidence="1">
    <location>
        <begin position="1"/>
        <end position="25"/>
    </location>
</feature>
<feature type="chain" id="PRO_0000431000" description="Putative uncharacterized protein YER137W-A">
    <location>
        <begin position="26"/>
        <end position="101"/>
    </location>
</feature>
<reference key="1">
    <citation type="journal article" date="1997" name="Nature">
        <title>The nucleotide sequence of Saccharomyces cerevisiae chromosome V.</title>
        <authorList>
            <person name="Dietrich F.S."/>
            <person name="Mulligan J.T."/>
            <person name="Hennessy K.M."/>
            <person name="Yelton M.A."/>
            <person name="Allen E."/>
            <person name="Araujo R."/>
            <person name="Aviles E."/>
            <person name="Berno A."/>
            <person name="Brennan T."/>
            <person name="Carpenter J."/>
            <person name="Chen E."/>
            <person name="Cherry J.M."/>
            <person name="Chung E."/>
            <person name="Duncan M."/>
            <person name="Guzman E."/>
            <person name="Hartzell G."/>
            <person name="Hunicke-Smith S."/>
            <person name="Hyman R.W."/>
            <person name="Kayser A."/>
            <person name="Komp C."/>
            <person name="Lashkari D."/>
            <person name="Lew H."/>
            <person name="Lin D."/>
            <person name="Mosedale D."/>
            <person name="Nakahara K."/>
            <person name="Namath A."/>
            <person name="Norgren R."/>
            <person name="Oefner P."/>
            <person name="Oh C."/>
            <person name="Petel F.X."/>
            <person name="Roberts D."/>
            <person name="Sehl P."/>
            <person name="Schramm S."/>
            <person name="Shogren T."/>
            <person name="Smith V."/>
            <person name="Taylor P."/>
            <person name="Wei Y."/>
            <person name="Botstein D."/>
            <person name="Davis R.W."/>
        </authorList>
    </citation>
    <scope>NUCLEOTIDE SEQUENCE [LARGE SCALE GENOMIC DNA]</scope>
    <source>
        <strain>ATCC 204508 / S288c</strain>
    </source>
</reference>
<reference key="2">
    <citation type="journal article" date="2014" name="G3 (Bethesda)">
        <title>The reference genome sequence of Saccharomyces cerevisiae: Then and now.</title>
        <authorList>
            <person name="Engel S.R."/>
            <person name="Dietrich F.S."/>
            <person name="Fisk D.G."/>
            <person name="Binkley G."/>
            <person name="Balakrishnan R."/>
            <person name="Costanzo M.C."/>
            <person name="Dwight S.S."/>
            <person name="Hitz B.C."/>
            <person name="Karra K."/>
            <person name="Nash R.S."/>
            <person name="Weng S."/>
            <person name="Wong E.D."/>
            <person name="Lloyd P."/>
            <person name="Skrzypek M.S."/>
            <person name="Miyasato S.R."/>
            <person name="Simison M."/>
            <person name="Cherry J.M."/>
        </authorList>
    </citation>
    <scope>GENOME REANNOTATION</scope>
    <source>
        <strain>ATCC 204508 / S288c</strain>
    </source>
</reference>
<organism>
    <name type="scientific">Saccharomyces cerevisiae (strain ATCC 204508 / S288c)</name>
    <name type="common">Baker's yeast</name>
    <dbReference type="NCBI Taxonomy" id="559292"/>
    <lineage>
        <taxon>Eukaryota</taxon>
        <taxon>Fungi</taxon>
        <taxon>Dikarya</taxon>
        <taxon>Ascomycota</taxon>
        <taxon>Saccharomycotina</taxon>
        <taxon>Saccharomycetes</taxon>
        <taxon>Saccharomycetales</taxon>
        <taxon>Saccharomycetaceae</taxon>
        <taxon>Saccharomyces</taxon>
    </lineage>
</organism>
<evidence type="ECO:0000255" key="1"/>
<evidence type="ECO:0000305" key="2"/>
<evidence type="ECO:0000305" key="3">
    <source>
    </source>
</evidence>
<evidence type="ECO:0000312" key="4">
    <source>
        <dbReference type="SGD" id="S000028757"/>
    </source>
</evidence>
<accession>A0A023PZG5</accession>
<name>YE137_YEAST</name>
<comment type="miscellaneous">
    <text evidence="2">Partially overlaps YER137C.</text>
</comment>
<comment type="caution">
    <text evidence="3">Product of a dubious gene prediction unlikely to encode a functional protein. Because of that it is not part of the S.cerevisiae S288c complete/reference proteome set.</text>
</comment>
<sequence>MISIPFRSTMSRTLVFIILPTVLSCNPSSRLMNFSNSFNLCSYSTCNCDPSFCFEMINLARTSIACDNLTISFSVLFDDSHIPCYNNPRYSFNKLTMTILY</sequence>
<gene>
    <name evidence="4" type="ordered locus">YER137W-A</name>
</gene>
<dbReference type="EMBL" id="KJ412239">
    <property type="protein sequence ID" value="AHX39282.1"/>
    <property type="molecule type" value="Genomic_DNA"/>
</dbReference>
<dbReference type="PaxDb" id="4932-YER137W-A"/>
<dbReference type="EnsemblFungi" id="YER137W-A_mRNA">
    <property type="protein sequence ID" value="YER137W-A"/>
    <property type="gene ID" value="YER137W-A"/>
</dbReference>
<dbReference type="AGR" id="SGD:S000028757"/>
<dbReference type="SGD" id="S000028757">
    <property type="gene designation" value="YER137W-A"/>
</dbReference>
<dbReference type="HOGENOM" id="CLU_2293283_0_0_1"/>